<reference key="1">
    <citation type="journal article" date="2000" name="Nature">
        <title>DNA sequence of both chromosomes of the cholera pathogen Vibrio cholerae.</title>
        <authorList>
            <person name="Heidelberg J.F."/>
            <person name="Eisen J.A."/>
            <person name="Nelson W.C."/>
            <person name="Clayton R.A."/>
            <person name="Gwinn M.L."/>
            <person name="Dodson R.J."/>
            <person name="Haft D.H."/>
            <person name="Hickey E.K."/>
            <person name="Peterson J.D."/>
            <person name="Umayam L.A."/>
            <person name="Gill S.R."/>
            <person name="Nelson K.E."/>
            <person name="Read T.D."/>
            <person name="Tettelin H."/>
            <person name="Richardson D.L."/>
            <person name="Ermolaeva M.D."/>
            <person name="Vamathevan J.J."/>
            <person name="Bass S."/>
            <person name="Qin H."/>
            <person name="Dragoi I."/>
            <person name="Sellers P."/>
            <person name="McDonald L.A."/>
            <person name="Utterback T.R."/>
            <person name="Fleischmann R.D."/>
            <person name="Nierman W.C."/>
            <person name="White O."/>
            <person name="Salzberg S.L."/>
            <person name="Smith H.O."/>
            <person name="Colwell R.R."/>
            <person name="Mekalanos J.J."/>
            <person name="Venter J.C."/>
            <person name="Fraser C.M."/>
        </authorList>
    </citation>
    <scope>NUCLEOTIDE SEQUENCE [LARGE SCALE GENOMIC DNA]</scope>
    <source>
        <strain>ATCC 39315 / El Tor Inaba N16961</strain>
    </source>
</reference>
<gene>
    <name evidence="1" type="primary">ruvB</name>
    <name type="ordered locus">VC_1845</name>
</gene>
<feature type="chain" id="PRO_0000165627" description="Holliday junction branch migration complex subunit RuvB">
    <location>
        <begin position="1"/>
        <end position="334"/>
    </location>
</feature>
<feature type="region of interest" description="Large ATPase domain (RuvB-L)" evidence="1">
    <location>
        <begin position="4"/>
        <end position="186"/>
    </location>
</feature>
<feature type="region of interest" description="Small ATPAse domain (RuvB-S)" evidence="1">
    <location>
        <begin position="187"/>
        <end position="257"/>
    </location>
</feature>
<feature type="region of interest" description="Head domain (RuvB-H)" evidence="1">
    <location>
        <begin position="260"/>
        <end position="334"/>
    </location>
</feature>
<feature type="binding site" evidence="1">
    <location>
        <position position="25"/>
    </location>
    <ligand>
        <name>ATP</name>
        <dbReference type="ChEBI" id="CHEBI:30616"/>
    </ligand>
</feature>
<feature type="binding site" evidence="1">
    <location>
        <position position="26"/>
    </location>
    <ligand>
        <name>ATP</name>
        <dbReference type="ChEBI" id="CHEBI:30616"/>
    </ligand>
</feature>
<feature type="binding site" evidence="1">
    <location>
        <position position="67"/>
    </location>
    <ligand>
        <name>ATP</name>
        <dbReference type="ChEBI" id="CHEBI:30616"/>
    </ligand>
</feature>
<feature type="binding site" evidence="1">
    <location>
        <position position="70"/>
    </location>
    <ligand>
        <name>ATP</name>
        <dbReference type="ChEBI" id="CHEBI:30616"/>
    </ligand>
</feature>
<feature type="binding site" evidence="1">
    <location>
        <position position="71"/>
    </location>
    <ligand>
        <name>ATP</name>
        <dbReference type="ChEBI" id="CHEBI:30616"/>
    </ligand>
</feature>
<feature type="binding site" evidence="1">
    <location>
        <position position="71"/>
    </location>
    <ligand>
        <name>Mg(2+)</name>
        <dbReference type="ChEBI" id="CHEBI:18420"/>
    </ligand>
</feature>
<feature type="binding site" evidence="1">
    <location>
        <position position="72"/>
    </location>
    <ligand>
        <name>ATP</name>
        <dbReference type="ChEBI" id="CHEBI:30616"/>
    </ligand>
</feature>
<feature type="binding site" evidence="1">
    <location>
        <begin position="133"/>
        <end position="135"/>
    </location>
    <ligand>
        <name>ATP</name>
        <dbReference type="ChEBI" id="CHEBI:30616"/>
    </ligand>
</feature>
<feature type="binding site" evidence="1">
    <location>
        <position position="176"/>
    </location>
    <ligand>
        <name>ATP</name>
        <dbReference type="ChEBI" id="CHEBI:30616"/>
    </ligand>
</feature>
<feature type="binding site" evidence="1">
    <location>
        <position position="186"/>
    </location>
    <ligand>
        <name>ATP</name>
        <dbReference type="ChEBI" id="CHEBI:30616"/>
    </ligand>
</feature>
<feature type="binding site" evidence="1">
    <location>
        <position position="223"/>
    </location>
    <ligand>
        <name>ATP</name>
        <dbReference type="ChEBI" id="CHEBI:30616"/>
    </ligand>
</feature>
<feature type="binding site" evidence="1">
    <location>
        <position position="315"/>
    </location>
    <ligand>
        <name>DNA</name>
        <dbReference type="ChEBI" id="CHEBI:16991"/>
    </ligand>
</feature>
<feature type="binding site" evidence="1">
    <location>
        <position position="320"/>
    </location>
    <ligand>
        <name>DNA</name>
        <dbReference type="ChEBI" id="CHEBI:16991"/>
    </ligand>
</feature>
<protein>
    <recommendedName>
        <fullName evidence="1">Holliday junction branch migration complex subunit RuvB</fullName>
        <ecNumber evidence="1">3.6.4.-</ecNumber>
    </recommendedName>
</protein>
<name>RUVB_VIBCH</name>
<evidence type="ECO:0000255" key="1">
    <source>
        <dbReference type="HAMAP-Rule" id="MF_00016"/>
    </source>
</evidence>
<accession>Q9KR02</accession>
<organism>
    <name type="scientific">Vibrio cholerae serotype O1 (strain ATCC 39315 / El Tor Inaba N16961)</name>
    <dbReference type="NCBI Taxonomy" id="243277"/>
    <lineage>
        <taxon>Bacteria</taxon>
        <taxon>Pseudomonadati</taxon>
        <taxon>Pseudomonadota</taxon>
        <taxon>Gammaproteobacteria</taxon>
        <taxon>Vibrionales</taxon>
        <taxon>Vibrionaceae</taxon>
        <taxon>Vibrio</taxon>
    </lineage>
</organism>
<proteinExistence type="inferred from homology"/>
<comment type="function">
    <text evidence="1">The RuvA-RuvB-RuvC complex processes Holliday junction (HJ) DNA during genetic recombination and DNA repair, while the RuvA-RuvB complex plays an important role in the rescue of blocked DNA replication forks via replication fork reversal (RFR). RuvA specifically binds to HJ cruciform DNA, conferring on it an open structure. The RuvB hexamer acts as an ATP-dependent pump, pulling dsDNA into and through the RuvAB complex. RuvB forms 2 homohexamers on either side of HJ DNA bound by 1 or 2 RuvA tetramers; 4 subunits per hexamer contact DNA at a time. Coordinated motions by a converter formed by DNA-disengaged RuvB subunits stimulates ATP hydrolysis and nucleotide exchange. Immobilization of the converter enables RuvB to convert the ATP-contained energy into a lever motion, pulling 2 nucleotides of DNA out of the RuvA tetramer per ATP hydrolyzed, thus driving DNA branch migration. The RuvB motors rotate together with the DNA substrate, which together with the progressing nucleotide cycle form the mechanistic basis for DNA recombination by continuous HJ branch migration. Branch migration allows RuvC to scan DNA until it finds its consensus sequence, where it cleaves and resolves cruciform DNA.</text>
</comment>
<comment type="catalytic activity">
    <reaction evidence="1">
        <text>ATP + H2O = ADP + phosphate + H(+)</text>
        <dbReference type="Rhea" id="RHEA:13065"/>
        <dbReference type="ChEBI" id="CHEBI:15377"/>
        <dbReference type="ChEBI" id="CHEBI:15378"/>
        <dbReference type="ChEBI" id="CHEBI:30616"/>
        <dbReference type="ChEBI" id="CHEBI:43474"/>
        <dbReference type="ChEBI" id="CHEBI:456216"/>
    </reaction>
</comment>
<comment type="subunit">
    <text evidence="1">Homohexamer. Forms an RuvA(8)-RuvB(12)-Holliday junction (HJ) complex. HJ DNA is sandwiched between 2 RuvA tetramers; dsDNA enters through RuvA and exits via RuvB. An RuvB hexamer assembles on each DNA strand where it exits the tetramer. Each RuvB hexamer is contacted by two RuvA subunits (via domain III) on 2 adjacent RuvB subunits; this complex drives branch migration. In the full resolvosome a probable DNA-RuvA(4)-RuvB(12)-RuvC(2) complex forms which resolves the HJ.</text>
</comment>
<comment type="subcellular location">
    <subcellularLocation>
        <location evidence="1">Cytoplasm</location>
    </subcellularLocation>
</comment>
<comment type="domain">
    <text evidence="1">Has 3 domains, the large (RuvB-L) and small ATPase (RuvB-S) domains and the C-terminal head (RuvB-H) domain. The head domain binds DNA, while the ATPase domains jointly bind ATP, ADP or are empty depending on the state of the subunit in the translocation cycle. During a single DNA translocation step the structure of each domain remains the same, but their relative positions change.</text>
</comment>
<comment type="similarity">
    <text evidence="1">Belongs to the RuvB family.</text>
</comment>
<dbReference type="EC" id="3.6.4.-" evidence="1"/>
<dbReference type="EMBL" id="AE003852">
    <property type="protein sequence ID" value="AAF94993.1"/>
    <property type="molecule type" value="Genomic_DNA"/>
</dbReference>
<dbReference type="PIR" id="F82149">
    <property type="entry name" value="F82149"/>
</dbReference>
<dbReference type="RefSeq" id="NP_231479.1">
    <property type="nucleotide sequence ID" value="NC_002505.1"/>
</dbReference>
<dbReference type="RefSeq" id="WP_000568491.1">
    <property type="nucleotide sequence ID" value="NZ_LT906614.1"/>
</dbReference>
<dbReference type="SMR" id="Q9KR02"/>
<dbReference type="STRING" id="243277.VC_1845"/>
<dbReference type="DNASU" id="2613599"/>
<dbReference type="EnsemblBacteria" id="AAF94993">
    <property type="protein sequence ID" value="AAF94993"/>
    <property type="gene ID" value="VC_1845"/>
</dbReference>
<dbReference type="GeneID" id="69719524"/>
<dbReference type="KEGG" id="vch:VC_1845"/>
<dbReference type="PATRIC" id="fig|243277.26.peg.1761"/>
<dbReference type="eggNOG" id="COG2255">
    <property type="taxonomic scope" value="Bacteria"/>
</dbReference>
<dbReference type="HOGENOM" id="CLU_055599_1_0_6"/>
<dbReference type="Proteomes" id="UP000000584">
    <property type="component" value="Chromosome 1"/>
</dbReference>
<dbReference type="GO" id="GO:0005737">
    <property type="term" value="C:cytoplasm"/>
    <property type="evidence" value="ECO:0007669"/>
    <property type="project" value="UniProtKB-SubCell"/>
</dbReference>
<dbReference type="GO" id="GO:0048476">
    <property type="term" value="C:Holliday junction resolvase complex"/>
    <property type="evidence" value="ECO:0007669"/>
    <property type="project" value="UniProtKB-UniRule"/>
</dbReference>
<dbReference type="GO" id="GO:0005524">
    <property type="term" value="F:ATP binding"/>
    <property type="evidence" value="ECO:0007669"/>
    <property type="project" value="UniProtKB-UniRule"/>
</dbReference>
<dbReference type="GO" id="GO:0016887">
    <property type="term" value="F:ATP hydrolysis activity"/>
    <property type="evidence" value="ECO:0007669"/>
    <property type="project" value="InterPro"/>
</dbReference>
<dbReference type="GO" id="GO:0000400">
    <property type="term" value="F:four-way junction DNA binding"/>
    <property type="evidence" value="ECO:0007669"/>
    <property type="project" value="UniProtKB-UniRule"/>
</dbReference>
<dbReference type="GO" id="GO:0009378">
    <property type="term" value="F:four-way junction helicase activity"/>
    <property type="evidence" value="ECO:0007669"/>
    <property type="project" value="InterPro"/>
</dbReference>
<dbReference type="GO" id="GO:0006310">
    <property type="term" value="P:DNA recombination"/>
    <property type="evidence" value="ECO:0007669"/>
    <property type="project" value="UniProtKB-UniRule"/>
</dbReference>
<dbReference type="GO" id="GO:0006281">
    <property type="term" value="P:DNA repair"/>
    <property type="evidence" value="ECO:0007669"/>
    <property type="project" value="UniProtKB-UniRule"/>
</dbReference>
<dbReference type="CDD" id="cd00009">
    <property type="entry name" value="AAA"/>
    <property type="match status" value="1"/>
</dbReference>
<dbReference type="FunFam" id="1.10.10.10:FF:000086">
    <property type="entry name" value="Holliday junction ATP-dependent DNA helicase RuvB"/>
    <property type="match status" value="1"/>
</dbReference>
<dbReference type="FunFam" id="1.10.8.60:FF:000023">
    <property type="entry name" value="Holliday junction ATP-dependent DNA helicase RuvB"/>
    <property type="match status" value="1"/>
</dbReference>
<dbReference type="FunFam" id="3.40.50.300:FF:000073">
    <property type="entry name" value="Holliday junction ATP-dependent DNA helicase RuvB"/>
    <property type="match status" value="1"/>
</dbReference>
<dbReference type="Gene3D" id="1.10.8.60">
    <property type="match status" value="1"/>
</dbReference>
<dbReference type="Gene3D" id="3.40.50.300">
    <property type="entry name" value="P-loop containing nucleotide triphosphate hydrolases"/>
    <property type="match status" value="1"/>
</dbReference>
<dbReference type="Gene3D" id="1.10.10.10">
    <property type="entry name" value="Winged helix-like DNA-binding domain superfamily/Winged helix DNA-binding domain"/>
    <property type="match status" value="1"/>
</dbReference>
<dbReference type="HAMAP" id="MF_00016">
    <property type="entry name" value="DNA_HJ_migration_RuvB"/>
    <property type="match status" value="1"/>
</dbReference>
<dbReference type="InterPro" id="IPR003593">
    <property type="entry name" value="AAA+_ATPase"/>
</dbReference>
<dbReference type="InterPro" id="IPR041445">
    <property type="entry name" value="AAA_lid_4"/>
</dbReference>
<dbReference type="InterPro" id="IPR004605">
    <property type="entry name" value="DNA_helicase_Holl-junc_RuvB"/>
</dbReference>
<dbReference type="InterPro" id="IPR027417">
    <property type="entry name" value="P-loop_NTPase"/>
</dbReference>
<dbReference type="InterPro" id="IPR008824">
    <property type="entry name" value="RuvB-like_N"/>
</dbReference>
<dbReference type="InterPro" id="IPR008823">
    <property type="entry name" value="RuvB_C"/>
</dbReference>
<dbReference type="InterPro" id="IPR036388">
    <property type="entry name" value="WH-like_DNA-bd_sf"/>
</dbReference>
<dbReference type="InterPro" id="IPR036390">
    <property type="entry name" value="WH_DNA-bd_sf"/>
</dbReference>
<dbReference type="NCBIfam" id="NF000868">
    <property type="entry name" value="PRK00080.1"/>
    <property type="match status" value="1"/>
</dbReference>
<dbReference type="NCBIfam" id="TIGR00635">
    <property type="entry name" value="ruvB"/>
    <property type="match status" value="1"/>
</dbReference>
<dbReference type="PANTHER" id="PTHR42848">
    <property type="match status" value="1"/>
</dbReference>
<dbReference type="PANTHER" id="PTHR42848:SF1">
    <property type="entry name" value="HOLLIDAY JUNCTION BRANCH MIGRATION COMPLEX SUBUNIT RUVB"/>
    <property type="match status" value="1"/>
</dbReference>
<dbReference type="Pfam" id="PF17864">
    <property type="entry name" value="AAA_lid_4"/>
    <property type="match status" value="1"/>
</dbReference>
<dbReference type="Pfam" id="PF05491">
    <property type="entry name" value="RuvB_C"/>
    <property type="match status" value="1"/>
</dbReference>
<dbReference type="Pfam" id="PF05496">
    <property type="entry name" value="RuvB_N"/>
    <property type="match status" value="1"/>
</dbReference>
<dbReference type="SMART" id="SM00382">
    <property type="entry name" value="AAA"/>
    <property type="match status" value="1"/>
</dbReference>
<dbReference type="SUPFAM" id="SSF52540">
    <property type="entry name" value="P-loop containing nucleoside triphosphate hydrolases"/>
    <property type="match status" value="1"/>
</dbReference>
<dbReference type="SUPFAM" id="SSF46785">
    <property type="entry name" value="Winged helix' DNA-binding domain"/>
    <property type="match status" value="1"/>
</dbReference>
<keyword id="KW-0067">ATP-binding</keyword>
<keyword id="KW-0963">Cytoplasm</keyword>
<keyword id="KW-0227">DNA damage</keyword>
<keyword id="KW-0233">DNA recombination</keyword>
<keyword id="KW-0234">DNA repair</keyword>
<keyword id="KW-0238">DNA-binding</keyword>
<keyword id="KW-0378">Hydrolase</keyword>
<keyword id="KW-0547">Nucleotide-binding</keyword>
<keyword id="KW-1185">Reference proteome</keyword>
<sequence>MIEADRLIAPISNHFKDEEVIDRAIRPKKLADYQGQDHVRDQMEIFIQAAQMRQEALDHLLIFGPPGLGKTTLANIVANEMGVNIRTTSGPVLEKAGDLAALLTNLEENDVLFIDEIHRLSPMVEEVLYPAMEDYQLDIMIGEGPAARSIKIDLPPFTLIGATTRAGSLTSPLRDRFGIVQRLEYYKVADLQHIVQRSAQCLGLSMDSEGALEVARRARGTPRIANRLLRRVRDYAEVKGDGHICAQTADRALNMLDVDHQGFDYMDRKLLLAIMEKFSGGPVGIDNLAAAIGEEKDTIEDVLEPFLIQQGYLQRTPRGRIATDRAYLHFGIEK</sequence>